<organism>
    <name type="scientific">Leptothrix cholodnii (strain ATCC 51168 / LMG 8142 / SP-6)</name>
    <name type="common">Leptothrix discophora (strain SP-6)</name>
    <dbReference type="NCBI Taxonomy" id="395495"/>
    <lineage>
        <taxon>Bacteria</taxon>
        <taxon>Pseudomonadati</taxon>
        <taxon>Pseudomonadota</taxon>
        <taxon>Betaproteobacteria</taxon>
        <taxon>Burkholderiales</taxon>
        <taxon>Sphaerotilaceae</taxon>
        <taxon>Leptothrix</taxon>
    </lineage>
</organism>
<comment type="function">
    <text evidence="1">NDH-1 shuttles electrons from NADH, via FMN and iron-sulfur (Fe-S) centers, to quinones in the respiratory chain. Couples the redox reaction to proton translocation (for every two electrons transferred, four hydrogen ions are translocated across the cytoplasmic membrane), and thus conserves the redox energy in a proton gradient (By similarity).</text>
</comment>
<comment type="catalytic activity">
    <reaction evidence="2">
        <text>a quinone + NADH + 5 H(+)(in) = a quinol + NAD(+) + 4 H(+)(out)</text>
        <dbReference type="Rhea" id="RHEA:57888"/>
        <dbReference type="ChEBI" id="CHEBI:15378"/>
        <dbReference type="ChEBI" id="CHEBI:24646"/>
        <dbReference type="ChEBI" id="CHEBI:57540"/>
        <dbReference type="ChEBI" id="CHEBI:57945"/>
        <dbReference type="ChEBI" id="CHEBI:132124"/>
    </reaction>
</comment>
<comment type="cofactor">
    <cofactor evidence="2">
        <name>[4Fe-4S] cluster</name>
        <dbReference type="ChEBI" id="CHEBI:49883"/>
    </cofactor>
    <text evidence="2">Binds 1 [4Fe-4S] cluster.</text>
</comment>
<comment type="subunit">
    <text evidence="2">NDH-1 is composed of 14 different subunits. Subunits NuoB, C, D, E, F, and G constitute the peripheral sector of the complex.</text>
</comment>
<comment type="subcellular location">
    <subcellularLocation>
        <location evidence="2">Cell inner membrane</location>
        <topology evidence="2">Peripheral membrane protein</topology>
        <orientation evidence="2">Cytoplasmic side</orientation>
    </subcellularLocation>
</comment>
<comment type="similarity">
    <text evidence="2">Belongs to the complex I 20 kDa subunit family.</text>
</comment>
<sequence>MGIEGVLKEGFVTTSVDTLINWSKTGSLWPMTFGLACCAVEMMHAGASRYDIDRFGMLFRPSPRQSDLMIVAGTLCNKMAPALRKVYDQMAEPRWVLSMGSCANGGGYYHYSYSVVRGCDRVVPVDVYVPGCPPTAEALLYGILQLQAKIRRENTIAR</sequence>
<proteinExistence type="inferred from homology"/>
<reference key="1">
    <citation type="submission" date="2008-03" db="EMBL/GenBank/DDBJ databases">
        <title>Complete sequence of Leptothrix cholodnii SP-6.</title>
        <authorList>
            <consortium name="US DOE Joint Genome Institute"/>
            <person name="Copeland A."/>
            <person name="Lucas S."/>
            <person name="Lapidus A."/>
            <person name="Glavina del Rio T."/>
            <person name="Dalin E."/>
            <person name="Tice H."/>
            <person name="Bruce D."/>
            <person name="Goodwin L."/>
            <person name="Pitluck S."/>
            <person name="Chertkov O."/>
            <person name="Brettin T."/>
            <person name="Detter J.C."/>
            <person name="Han C."/>
            <person name="Kuske C.R."/>
            <person name="Schmutz J."/>
            <person name="Larimer F."/>
            <person name="Land M."/>
            <person name="Hauser L."/>
            <person name="Kyrpides N."/>
            <person name="Lykidis A."/>
            <person name="Emerson D."/>
            <person name="Richardson P."/>
        </authorList>
    </citation>
    <scope>NUCLEOTIDE SEQUENCE [LARGE SCALE GENOMIC DNA]</scope>
    <source>
        <strain>ATCC 51168 / LMG 8142 / SP-6</strain>
    </source>
</reference>
<accession>B1Y828</accession>
<gene>
    <name evidence="2" type="primary">nuoB</name>
    <name type="ordered locus">Lcho_1502</name>
</gene>
<evidence type="ECO:0000250" key="1"/>
<evidence type="ECO:0000255" key="2">
    <source>
        <dbReference type="HAMAP-Rule" id="MF_01356"/>
    </source>
</evidence>
<protein>
    <recommendedName>
        <fullName evidence="2">NADH-quinone oxidoreductase subunit B</fullName>
        <ecNumber evidence="2">7.1.1.-</ecNumber>
    </recommendedName>
    <alternativeName>
        <fullName evidence="2">NADH dehydrogenase I subunit B</fullName>
    </alternativeName>
    <alternativeName>
        <fullName evidence="2">NDH-1 subunit B</fullName>
    </alternativeName>
</protein>
<dbReference type="EC" id="7.1.1.-" evidence="2"/>
<dbReference type="EMBL" id="CP001013">
    <property type="protein sequence ID" value="ACB33770.1"/>
    <property type="molecule type" value="Genomic_DNA"/>
</dbReference>
<dbReference type="RefSeq" id="WP_012346532.1">
    <property type="nucleotide sequence ID" value="NC_010524.1"/>
</dbReference>
<dbReference type="SMR" id="B1Y828"/>
<dbReference type="STRING" id="395495.Lcho_1502"/>
<dbReference type="KEGG" id="lch:Lcho_1502"/>
<dbReference type="eggNOG" id="COG0377">
    <property type="taxonomic scope" value="Bacteria"/>
</dbReference>
<dbReference type="HOGENOM" id="CLU_055737_7_3_4"/>
<dbReference type="OrthoDB" id="9786737at2"/>
<dbReference type="Proteomes" id="UP000001693">
    <property type="component" value="Chromosome"/>
</dbReference>
<dbReference type="GO" id="GO:0005886">
    <property type="term" value="C:plasma membrane"/>
    <property type="evidence" value="ECO:0007669"/>
    <property type="project" value="UniProtKB-SubCell"/>
</dbReference>
<dbReference type="GO" id="GO:0045271">
    <property type="term" value="C:respiratory chain complex I"/>
    <property type="evidence" value="ECO:0007669"/>
    <property type="project" value="TreeGrafter"/>
</dbReference>
<dbReference type="GO" id="GO:0051539">
    <property type="term" value="F:4 iron, 4 sulfur cluster binding"/>
    <property type="evidence" value="ECO:0007669"/>
    <property type="project" value="UniProtKB-KW"/>
</dbReference>
<dbReference type="GO" id="GO:0005506">
    <property type="term" value="F:iron ion binding"/>
    <property type="evidence" value="ECO:0007669"/>
    <property type="project" value="UniProtKB-UniRule"/>
</dbReference>
<dbReference type="GO" id="GO:0008137">
    <property type="term" value="F:NADH dehydrogenase (ubiquinone) activity"/>
    <property type="evidence" value="ECO:0007669"/>
    <property type="project" value="InterPro"/>
</dbReference>
<dbReference type="GO" id="GO:0050136">
    <property type="term" value="F:NADH:ubiquinone reductase (non-electrogenic) activity"/>
    <property type="evidence" value="ECO:0007669"/>
    <property type="project" value="UniProtKB-UniRule"/>
</dbReference>
<dbReference type="GO" id="GO:0048038">
    <property type="term" value="F:quinone binding"/>
    <property type="evidence" value="ECO:0007669"/>
    <property type="project" value="UniProtKB-KW"/>
</dbReference>
<dbReference type="GO" id="GO:0009060">
    <property type="term" value="P:aerobic respiration"/>
    <property type="evidence" value="ECO:0007669"/>
    <property type="project" value="TreeGrafter"/>
</dbReference>
<dbReference type="GO" id="GO:0015990">
    <property type="term" value="P:electron transport coupled proton transport"/>
    <property type="evidence" value="ECO:0007669"/>
    <property type="project" value="TreeGrafter"/>
</dbReference>
<dbReference type="FunFam" id="3.40.50.12280:FF:000001">
    <property type="entry name" value="NADH-quinone oxidoreductase subunit B 2"/>
    <property type="match status" value="1"/>
</dbReference>
<dbReference type="Gene3D" id="3.40.50.12280">
    <property type="match status" value="1"/>
</dbReference>
<dbReference type="HAMAP" id="MF_01356">
    <property type="entry name" value="NDH1_NuoB"/>
    <property type="match status" value="1"/>
</dbReference>
<dbReference type="InterPro" id="IPR006137">
    <property type="entry name" value="NADH_UbQ_OxRdtase-like_20kDa"/>
</dbReference>
<dbReference type="InterPro" id="IPR006138">
    <property type="entry name" value="NADH_UQ_OxRdtase_20Kd_su"/>
</dbReference>
<dbReference type="NCBIfam" id="TIGR01957">
    <property type="entry name" value="nuoB_fam"/>
    <property type="match status" value="1"/>
</dbReference>
<dbReference type="NCBIfam" id="NF005012">
    <property type="entry name" value="PRK06411.1"/>
    <property type="match status" value="1"/>
</dbReference>
<dbReference type="PANTHER" id="PTHR11995">
    <property type="entry name" value="NADH DEHYDROGENASE"/>
    <property type="match status" value="1"/>
</dbReference>
<dbReference type="PANTHER" id="PTHR11995:SF14">
    <property type="entry name" value="NADH DEHYDROGENASE [UBIQUINONE] IRON-SULFUR PROTEIN 7, MITOCHONDRIAL"/>
    <property type="match status" value="1"/>
</dbReference>
<dbReference type="Pfam" id="PF01058">
    <property type="entry name" value="Oxidored_q6"/>
    <property type="match status" value="1"/>
</dbReference>
<dbReference type="SUPFAM" id="SSF56770">
    <property type="entry name" value="HydA/Nqo6-like"/>
    <property type="match status" value="1"/>
</dbReference>
<dbReference type="PROSITE" id="PS01150">
    <property type="entry name" value="COMPLEX1_20K"/>
    <property type="match status" value="1"/>
</dbReference>
<keyword id="KW-0004">4Fe-4S</keyword>
<keyword id="KW-0997">Cell inner membrane</keyword>
<keyword id="KW-1003">Cell membrane</keyword>
<keyword id="KW-0408">Iron</keyword>
<keyword id="KW-0411">Iron-sulfur</keyword>
<keyword id="KW-0472">Membrane</keyword>
<keyword id="KW-0479">Metal-binding</keyword>
<keyword id="KW-0520">NAD</keyword>
<keyword id="KW-0874">Quinone</keyword>
<keyword id="KW-1185">Reference proteome</keyword>
<keyword id="KW-1278">Translocase</keyword>
<keyword id="KW-0813">Transport</keyword>
<keyword id="KW-0830">Ubiquinone</keyword>
<name>NUOB_LEPCP</name>
<feature type="chain" id="PRO_0000358420" description="NADH-quinone oxidoreductase subunit B">
    <location>
        <begin position="1"/>
        <end position="158"/>
    </location>
</feature>
<feature type="binding site" evidence="2">
    <location>
        <position position="37"/>
    </location>
    <ligand>
        <name>[4Fe-4S] cluster</name>
        <dbReference type="ChEBI" id="CHEBI:49883"/>
    </ligand>
</feature>
<feature type="binding site" evidence="2">
    <location>
        <position position="38"/>
    </location>
    <ligand>
        <name>[4Fe-4S] cluster</name>
        <dbReference type="ChEBI" id="CHEBI:49883"/>
    </ligand>
</feature>
<feature type="binding site" evidence="2">
    <location>
        <position position="102"/>
    </location>
    <ligand>
        <name>[4Fe-4S] cluster</name>
        <dbReference type="ChEBI" id="CHEBI:49883"/>
    </ligand>
</feature>
<feature type="binding site" evidence="2">
    <location>
        <position position="132"/>
    </location>
    <ligand>
        <name>[4Fe-4S] cluster</name>
        <dbReference type="ChEBI" id="CHEBI:49883"/>
    </ligand>
</feature>